<sequence length="298" mass="34077">MFKSGFVAILGRPNVGKSTFLNHVMGQKIAIMSDKAQTTRNKIMGIYTTETEQIVFIDTPGIHKPKTALGDFMVESAYSTLREVETVLFMVPADEKRGKGDDMIIERLKAAKIPVILVINKIDKVHPDQLLAQIDDFRSQMEFKEVVPISALEGNNVPTLIKLLTDNLEEGFQYFPEDQITDHPERFLVSEMIREKVLHLTQQEVPHSVAVVVESMKRDEETDKVHIRATIMVERDSQKGIIIGKQGAMLKKIGKMARRDIELMLGDKVYLETWVKVKKNWRDKKLDLADFGYNEKEY</sequence>
<accession>Q1J822</accession>
<evidence type="ECO:0000255" key="1">
    <source>
        <dbReference type="HAMAP-Rule" id="MF_00367"/>
    </source>
</evidence>
<evidence type="ECO:0000255" key="2">
    <source>
        <dbReference type="PROSITE-ProRule" id="PRU01050"/>
    </source>
</evidence>
<name>ERA_STRPF</name>
<feature type="chain" id="PRO_1000079754" description="GTPase Era">
    <location>
        <begin position="1"/>
        <end position="298"/>
    </location>
</feature>
<feature type="domain" description="Era-type G" evidence="2">
    <location>
        <begin position="3"/>
        <end position="170"/>
    </location>
</feature>
<feature type="domain" description="KH type-2" evidence="1">
    <location>
        <begin position="201"/>
        <end position="279"/>
    </location>
</feature>
<feature type="region of interest" description="G1" evidence="2">
    <location>
        <begin position="11"/>
        <end position="18"/>
    </location>
</feature>
<feature type="region of interest" description="G2" evidence="2">
    <location>
        <begin position="37"/>
        <end position="41"/>
    </location>
</feature>
<feature type="region of interest" description="G3" evidence="2">
    <location>
        <begin position="58"/>
        <end position="61"/>
    </location>
</feature>
<feature type="region of interest" description="G4" evidence="2">
    <location>
        <begin position="120"/>
        <end position="123"/>
    </location>
</feature>
<feature type="region of interest" description="G5" evidence="2">
    <location>
        <begin position="149"/>
        <end position="151"/>
    </location>
</feature>
<feature type="binding site" evidence="1">
    <location>
        <begin position="11"/>
        <end position="18"/>
    </location>
    <ligand>
        <name>GTP</name>
        <dbReference type="ChEBI" id="CHEBI:37565"/>
    </ligand>
</feature>
<feature type="binding site" evidence="1">
    <location>
        <begin position="58"/>
        <end position="62"/>
    </location>
    <ligand>
        <name>GTP</name>
        <dbReference type="ChEBI" id="CHEBI:37565"/>
    </ligand>
</feature>
<feature type="binding site" evidence="1">
    <location>
        <begin position="120"/>
        <end position="123"/>
    </location>
    <ligand>
        <name>GTP</name>
        <dbReference type="ChEBI" id="CHEBI:37565"/>
    </ligand>
</feature>
<reference key="1">
    <citation type="journal article" date="2006" name="Proc. Natl. Acad. Sci. U.S.A.">
        <title>Molecular genetic anatomy of inter- and intraserotype variation in the human bacterial pathogen group A Streptococcus.</title>
        <authorList>
            <person name="Beres S.B."/>
            <person name="Richter E.W."/>
            <person name="Nagiec M.J."/>
            <person name="Sumby P."/>
            <person name="Porcella S.F."/>
            <person name="DeLeo F.R."/>
            <person name="Musser J.M."/>
        </authorList>
    </citation>
    <scope>NUCLEOTIDE SEQUENCE [LARGE SCALE GENOMIC DNA]</scope>
    <source>
        <strain>MGAS10750</strain>
    </source>
</reference>
<comment type="function">
    <text evidence="1">An essential GTPase that binds both GDP and GTP, with rapid nucleotide exchange. Plays a role in 16S rRNA processing and 30S ribosomal subunit biogenesis and possibly also in cell cycle regulation and energy metabolism.</text>
</comment>
<comment type="subunit">
    <text evidence="1">Monomer.</text>
</comment>
<comment type="subcellular location">
    <subcellularLocation>
        <location>Cytoplasm</location>
    </subcellularLocation>
    <subcellularLocation>
        <location evidence="1">Cell membrane</location>
        <topology evidence="1">Peripheral membrane protein</topology>
    </subcellularLocation>
</comment>
<comment type="similarity">
    <text evidence="1 2">Belongs to the TRAFAC class TrmE-Era-EngA-EngB-Septin-like GTPase superfamily. Era GTPase family.</text>
</comment>
<organism>
    <name type="scientific">Streptococcus pyogenes serotype M4 (strain MGAS10750)</name>
    <dbReference type="NCBI Taxonomy" id="370554"/>
    <lineage>
        <taxon>Bacteria</taxon>
        <taxon>Bacillati</taxon>
        <taxon>Bacillota</taxon>
        <taxon>Bacilli</taxon>
        <taxon>Lactobacillales</taxon>
        <taxon>Streptococcaceae</taxon>
        <taxon>Streptococcus</taxon>
    </lineage>
</organism>
<protein>
    <recommendedName>
        <fullName evidence="1">GTPase Era</fullName>
    </recommendedName>
</protein>
<keyword id="KW-1003">Cell membrane</keyword>
<keyword id="KW-0963">Cytoplasm</keyword>
<keyword id="KW-0342">GTP-binding</keyword>
<keyword id="KW-0472">Membrane</keyword>
<keyword id="KW-0547">Nucleotide-binding</keyword>
<keyword id="KW-0690">Ribosome biogenesis</keyword>
<keyword id="KW-0694">RNA-binding</keyword>
<keyword id="KW-0699">rRNA-binding</keyword>
<gene>
    <name evidence="1" type="primary">era</name>
    <name type="ordered locus">MGAS10750_Spy0389</name>
</gene>
<dbReference type="EMBL" id="CP000262">
    <property type="protein sequence ID" value="ABF37339.1"/>
    <property type="molecule type" value="Genomic_DNA"/>
</dbReference>
<dbReference type="SMR" id="Q1J822"/>
<dbReference type="KEGG" id="spi:MGAS10750_Spy0389"/>
<dbReference type="HOGENOM" id="CLU_038009_1_0_9"/>
<dbReference type="Proteomes" id="UP000002434">
    <property type="component" value="Chromosome"/>
</dbReference>
<dbReference type="GO" id="GO:0005829">
    <property type="term" value="C:cytosol"/>
    <property type="evidence" value="ECO:0007669"/>
    <property type="project" value="TreeGrafter"/>
</dbReference>
<dbReference type="GO" id="GO:0005886">
    <property type="term" value="C:plasma membrane"/>
    <property type="evidence" value="ECO:0007669"/>
    <property type="project" value="UniProtKB-SubCell"/>
</dbReference>
<dbReference type="GO" id="GO:0005525">
    <property type="term" value="F:GTP binding"/>
    <property type="evidence" value="ECO:0007669"/>
    <property type="project" value="UniProtKB-UniRule"/>
</dbReference>
<dbReference type="GO" id="GO:0003924">
    <property type="term" value="F:GTPase activity"/>
    <property type="evidence" value="ECO:0007669"/>
    <property type="project" value="UniProtKB-UniRule"/>
</dbReference>
<dbReference type="GO" id="GO:0043024">
    <property type="term" value="F:ribosomal small subunit binding"/>
    <property type="evidence" value="ECO:0007669"/>
    <property type="project" value="TreeGrafter"/>
</dbReference>
<dbReference type="GO" id="GO:0070181">
    <property type="term" value="F:small ribosomal subunit rRNA binding"/>
    <property type="evidence" value="ECO:0007669"/>
    <property type="project" value="UniProtKB-UniRule"/>
</dbReference>
<dbReference type="GO" id="GO:0000028">
    <property type="term" value="P:ribosomal small subunit assembly"/>
    <property type="evidence" value="ECO:0007669"/>
    <property type="project" value="TreeGrafter"/>
</dbReference>
<dbReference type="CDD" id="cd04163">
    <property type="entry name" value="Era"/>
    <property type="match status" value="1"/>
</dbReference>
<dbReference type="CDD" id="cd22534">
    <property type="entry name" value="KH-II_Era"/>
    <property type="match status" value="1"/>
</dbReference>
<dbReference type="FunFam" id="3.30.300.20:FF:000003">
    <property type="entry name" value="GTPase Era"/>
    <property type="match status" value="1"/>
</dbReference>
<dbReference type="FunFam" id="3.40.50.300:FF:000094">
    <property type="entry name" value="GTPase Era"/>
    <property type="match status" value="1"/>
</dbReference>
<dbReference type="Gene3D" id="3.30.300.20">
    <property type="match status" value="1"/>
</dbReference>
<dbReference type="Gene3D" id="3.40.50.300">
    <property type="entry name" value="P-loop containing nucleotide triphosphate hydrolases"/>
    <property type="match status" value="1"/>
</dbReference>
<dbReference type="HAMAP" id="MF_00367">
    <property type="entry name" value="GTPase_Era"/>
    <property type="match status" value="1"/>
</dbReference>
<dbReference type="InterPro" id="IPR030388">
    <property type="entry name" value="G_ERA_dom"/>
</dbReference>
<dbReference type="InterPro" id="IPR006073">
    <property type="entry name" value="GTP-bd"/>
</dbReference>
<dbReference type="InterPro" id="IPR005662">
    <property type="entry name" value="GTPase_Era-like"/>
</dbReference>
<dbReference type="InterPro" id="IPR015946">
    <property type="entry name" value="KH_dom-like_a/b"/>
</dbReference>
<dbReference type="InterPro" id="IPR004044">
    <property type="entry name" value="KH_dom_type_2"/>
</dbReference>
<dbReference type="InterPro" id="IPR009019">
    <property type="entry name" value="KH_sf_prok-type"/>
</dbReference>
<dbReference type="InterPro" id="IPR027417">
    <property type="entry name" value="P-loop_NTPase"/>
</dbReference>
<dbReference type="InterPro" id="IPR005225">
    <property type="entry name" value="Small_GTP-bd"/>
</dbReference>
<dbReference type="NCBIfam" id="TIGR00436">
    <property type="entry name" value="era"/>
    <property type="match status" value="1"/>
</dbReference>
<dbReference type="NCBIfam" id="NF000908">
    <property type="entry name" value="PRK00089.1"/>
    <property type="match status" value="1"/>
</dbReference>
<dbReference type="NCBIfam" id="TIGR00231">
    <property type="entry name" value="small_GTP"/>
    <property type="match status" value="1"/>
</dbReference>
<dbReference type="PANTHER" id="PTHR42698">
    <property type="entry name" value="GTPASE ERA"/>
    <property type="match status" value="1"/>
</dbReference>
<dbReference type="PANTHER" id="PTHR42698:SF1">
    <property type="entry name" value="GTPASE ERA, MITOCHONDRIAL"/>
    <property type="match status" value="1"/>
</dbReference>
<dbReference type="Pfam" id="PF07650">
    <property type="entry name" value="KH_2"/>
    <property type="match status" value="1"/>
</dbReference>
<dbReference type="Pfam" id="PF01926">
    <property type="entry name" value="MMR_HSR1"/>
    <property type="match status" value="1"/>
</dbReference>
<dbReference type="SUPFAM" id="SSF52540">
    <property type="entry name" value="P-loop containing nucleoside triphosphate hydrolases"/>
    <property type="match status" value="1"/>
</dbReference>
<dbReference type="SUPFAM" id="SSF54814">
    <property type="entry name" value="Prokaryotic type KH domain (KH-domain type II)"/>
    <property type="match status" value="1"/>
</dbReference>
<dbReference type="PROSITE" id="PS51713">
    <property type="entry name" value="G_ERA"/>
    <property type="match status" value="1"/>
</dbReference>
<dbReference type="PROSITE" id="PS50823">
    <property type="entry name" value="KH_TYPE_2"/>
    <property type="match status" value="1"/>
</dbReference>
<proteinExistence type="inferred from homology"/>